<protein>
    <recommendedName>
        <fullName>Beta sliding clamp</fullName>
        <shortName>Beta clamp</shortName>
        <shortName>Sliding clamp</shortName>
    </recommendedName>
    <alternativeName>
        <fullName>Beta-clamp processivity factor</fullName>
    </alternativeName>
    <alternativeName>
        <fullName>DNA polymerase III beta sliding clamp subunit</fullName>
    </alternativeName>
    <alternativeName>
        <fullName>DNA polymerase III subunit beta</fullName>
    </alternativeName>
</protein>
<dbReference type="EMBL" id="U37793">
    <property type="protein sequence ID" value="AAB51448.1"/>
    <property type="molecule type" value="Genomic_DNA"/>
</dbReference>
<dbReference type="EMBL" id="CP001340">
    <property type="protein sequence ID" value="ACL93622.1"/>
    <property type="molecule type" value="Genomic_DNA"/>
</dbReference>
<dbReference type="EMBL" id="U00591">
    <property type="protein sequence ID" value="AAC43045.1"/>
    <property type="molecule type" value="Genomic_DNA"/>
</dbReference>
<dbReference type="PIR" id="A49347">
    <property type="entry name" value="A49347"/>
</dbReference>
<dbReference type="RefSeq" id="WP_010918045.1">
    <property type="nucleotide sequence ID" value="NC_011916.1"/>
</dbReference>
<dbReference type="RefSeq" id="YP_002515530.1">
    <property type="nucleotide sequence ID" value="NC_011916.1"/>
</dbReference>
<dbReference type="SMR" id="B8GXP6"/>
<dbReference type="GeneID" id="7332409"/>
<dbReference type="KEGG" id="ccs:CCNA_00155"/>
<dbReference type="PATRIC" id="fig|565050.3.peg.153"/>
<dbReference type="HOGENOM" id="CLU_038149_4_2_5"/>
<dbReference type="OrthoDB" id="8421503at2"/>
<dbReference type="PhylomeDB" id="B8GXP6"/>
<dbReference type="PRO" id="PR:B8GXP6"/>
<dbReference type="Proteomes" id="UP000001364">
    <property type="component" value="Chromosome"/>
</dbReference>
<dbReference type="GO" id="GO:0005737">
    <property type="term" value="C:cytoplasm"/>
    <property type="evidence" value="ECO:0007669"/>
    <property type="project" value="UniProtKB-SubCell"/>
</dbReference>
<dbReference type="GO" id="GO:0009360">
    <property type="term" value="C:DNA polymerase III complex"/>
    <property type="evidence" value="ECO:0007669"/>
    <property type="project" value="InterPro"/>
</dbReference>
<dbReference type="GO" id="GO:0008408">
    <property type="term" value="F:3'-5' exonuclease activity"/>
    <property type="evidence" value="ECO:0007669"/>
    <property type="project" value="InterPro"/>
</dbReference>
<dbReference type="GO" id="GO:0003677">
    <property type="term" value="F:DNA binding"/>
    <property type="evidence" value="ECO:0007669"/>
    <property type="project" value="UniProtKB-KW"/>
</dbReference>
<dbReference type="GO" id="GO:0003887">
    <property type="term" value="F:DNA-directed DNA polymerase activity"/>
    <property type="evidence" value="ECO:0007669"/>
    <property type="project" value="UniProtKB-KW"/>
</dbReference>
<dbReference type="GO" id="GO:0006271">
    <property type="term" value="P:DNA strand elongation involved in DNA replication"/>
    <property type="evidence" value="ECO:0007669"/>
    <property type="project" value="TreeGrafter"/>
</dbReference>
<dbReference type="CDD" id="cd00140">
    <property type="entry name" value="beta_clamp"/>
    <property type="match status" value="1"/>
</dbReference>
<dbReference type="Gene3D" id="3.10.150.10">
    <property type="entry name" value="DNA Polymerase III, subunit A, domain 2"/>
    <property type="match status" value="3"/>
</dbReference>
<dbReference type="InterPro" id="IPR046938">
    <property type="entry name" value="DNA_clamp_sf"/>
</dbReference>
<dbReference type="InterPro" id="IPR001001">
    <property type="entry name" value="DNA_polIII_beta"/>
</dbReference>
<dbReference type="InterPro" id="IPR022635">
    <property type="entry name" value="DNA_polIII_beta_C"/>
</dbReference>
<dbReference type="InterPro" id="IPR022637">
    <property type="entry name" value="DNA_polIII_beta_cen"/>
</dbReference>
<dbReference type="InterPro" id="IPR022634">
    <property type="entry name" value="DNA_polIII_beta_N"/>
</dbReference>
<dbReference type="NCBIfam" id="TIGR00663">
    <property type="entry name" value="dnan"/>
    <property type="match status" value="1"/>
</dbReference>
<dbReference type="PANTHER" id="PTHR30478:SF0">
    <property type="entry name" value="BETA SLIDING CLAMP"/>
    <property type="match status" value="1"/>
</dbReference>
<dbReference type="PANTHER" id="PTHR30478">
    <property type="entry name" value="DNA POLYMERASE III SUBUNIT BETA"/>
    <property type="match status" value="1"/>
</dbReference>
<dbReference type="Pfam" id="PF00712">
    <property type="entry name" value="DNA_pol3_beta"/>
    <property type="match status" value="1"/>
</dbReference>
<dbReference type="Pfam" id="PF02767">
    <property type="entry name" value="DNA_pol3_beta_2"/>
    <property type="match status" value="1"/>
</dbReference>
<dbReference type="Pfam" id="PF02768">
    <property type="entry name" value="DNA_pol3_beta_3"/>
    <property type="match status" value="1"/>
</dbReference>
<dbReference type="PIRSF" id="PIRSF000804">
    <property type="entry name" value="DNA_pol_III_b"/>
    <property type="match status" value="1"/>
</dbReference>
<dbReference type="SMART" id="SM00480">
    <property type="entry name" value="POL3Bc"/>
    <property type="match status" value="1"/>
</dbReference>
<dbReference type="SUPFAM" id="SSF55979">
    <property type="entry name" value="DNA clamp"/>
    <property type="match status" value="3"/>
</dbReference>
<organism>
    <name type="scientific">Caulobacter vibrioides (strain NA1000 / CB15N)</name>
    <name type="common">Caulobacter crescentus</name>
    <dbReference type="NCBI Taxonomy" id="565050"/>
    <lineage>
        <taxon>Bacteria</taxon>
        <taxon>Pseudomonadati</taxon>
        <taxon>Pseudomonadota</taxon>
        <taxon>Alphaproteobacteria</taxon>
        <taxon>Caulobacterales</taxon>
        <taxon>Caulobacteraceae</taxon>
        <taxon>Caulobacter</taxon>
    </lineage>
</organism>
<feature type="chain" id="PRO_0000378285" description="Beta sliding clamp">
    <location>
        <begin position="1"/>
        <end position="372"/>
    </location>
</feature>
<feature type="mutagenesis site" description="Suppresses growth defects of strains overexpressing SocB, no longer interacts with SocB, still interacts with HdaA. Replication forks do not collapse." evidence="2">
    <original>G</original>
    <variation>C</variation>
    <location>
        <position position="179"/>
    </location>
</feature>
<feature type="mutagenesis site" description="Suppresses growth defects of strains overexpressing SocB, no longer interacts with SocB or HdaA, cells are filamentous." evidence="2">
    <original>G</original>
    <variation>R</variation>
    <location>
        <position position="179"/>
    </location>
</feature>
<feature type="sequence conflict" description="In Ref. 3; AAC43045." evidence="4" ref="3">
    <original>T</original>
    <variation>N</variation>
    <location>
        <position position="278"/>
    </location>
</feature>
<feature type="sequence conflict" description="In Ref. 3; AAC43045." evidence="4" ref="3">
    <original>G</original>
    <variation>D</variation>
    <location>
        <position position="294"/>
    </location>
</feature>
<gene>
    <name type="primary">dnaN</name>
    <name type="ordered locus">CCNA_00155</name>
</gene>
<name>DPO3B_CAUVN</name>
<sequence>MKLTIERAALLKALGHVQSVVERRNTIPILSNILLSAEGDRLSFSATDLDMEIIDEGFAQIDVPGQITAPAHTLYEIVRKLPDGADVSLSFSGDDPRLVIQAGRSRFNLPVLPAGDFPVMSSDGLSSRIAVDTNELIRLIDKTRFAISTEETRYYLNGLYVHTVNEGGETKLRAVATDGHRLALAEMPAPEGAVGIPGVIVPRKTIAEARRLMESAGETVDLQVSPQKVRFEFGAAALTSKVIDGAFPDYMRVIPRDNAKILTLDNDLFAKAVDRVATISAEKSRSVKLAVEPGRITLTVRNMEAGQAVEEVEVDYDGEPFEIGFNARYLLDVCGQIAGPQAEFRFADPASPTLVVDPVDPGVKYVLMPLRV</sequence>
<reference key="1">
    <citation type="journal article" date="1997" name="J. Bacteriol.">
        <title>Transcription of genes encoding DNA replication proteins is coincident with cell cycle control of DNA replication in Caulobacter crescentus.</title>
        <authorList>
            <person name="Roberts R.C."/>
            <person name="Shapiro L."/>
        </authorList>
    </citation>
    <scope>NUCLEOTIDE SEQUENCE [GENOMIC DNA]</scope>
    <scope>INDUCTION</scope>
    <scope>DISRUPTION PHENOTYPE</scope>
    <source>
        <strain>NA1000 / CB15N</strain>
    </source>
</reference>
<reference key="2">
    <citation type="journal article" date="2010" name="J. Bacteriol.">
        <title>The genetic basis of laboratory adaptation in Caulobacter crescentus.</title>
        <authorList>
            <person name="Marks M.E."/>
            <person name="Castro-Rojas C.M."/>
            <person name="Teiling C."/>
            <person name="Du L."/>
            <person name="Kapatral V."/>
            <person name="Walunas T.L."/>
            <person name="Crosson S."/>
        </authorList>
    </citation>
    <scope>NUCLEOTIDE SEQUENCE [LARGE SCALE GENOMIC DNA]</scope>
    <source>
        <strain>NA1000 / CB15N</strain>
    </source>
</reference>
<reference key="3">
    <citation type="journal article" date="1993" name="J. Bacteriol.">
        <title>Asymmetric expression of the gyrase B gene from the replication-competent chromosome in the Caulobacter crescentus predivisional cell.</title>
        <authorList>
            <person name="Rizzo M.F."/>
            <person name="Shapiro L."/>
            <person name="Gober J."/>
        </authorList>
    </citation>
    <scope>NUCLEOTIDE SEQUENCE [GENOMIC DNA] OF 199-294</scope>
</reference>
<reference key="4">
    <citation type="journal article" date="2013" name="Mol. Cell">
        <title>A bacterial toxin inhibits DNA replication elongation through a direct interaction with the beta sliding clamp.</title>
        <authorList>
            <person name="Aakre C.D."/>
            <person name="Phung T.N."/>
            <person name="Huang D."/>
            <person name="Laub M.T."/>
        </authorList>
    </citation>
    <scope>FUNCTION</scope>
    <scope>INTERACTION WITH SOCB AND HDAA</scope>
    <scope>SUBCELLULAR LOCATION</scope>
    <scope>MUTAGENESIS OF GLY-179</scope>
</reference>
<proteinExistence type="evidence at protein level"/>
<accession>B8GXP6</accession>
<accession>P48198</accession>
<accession>Q45999</accession>
<comment type="function">
    <text evidence="1 2">Confers DNA tethering and processivity to DNA polymerases and other proteins. Acts as a clamp, forming a ring around DNA (a reaction catalyzed by the clamp-loading complex) which diffuses in an ATP-independent manner freely and bidirectionally along dsDNA. Initially characterized for its ability to contact the catalytic subunit of DNA polymerase III (Pol III), a complex, multichain enzyme responsible for most of the replicative synthesis in bacteria; Pol III exhibits 3'-5' exonuclease proofreading activity. The beta chain is required for initiation of replication as well as for processivity of DNA replication (By similarity). Interaction with toxin SocB via the hydrophobic cleft blocks DNA replication elongation (PubMed:24239291).</text>
</comment>
<comment type="subunit">
    <text evidence="1 2">Forms a ring-shaped head-to-tail homodimer around DNA which binds and tethers DNA polymerases and other proteins to the DNA. The DNA replisome complex has a single clamp-loading complex (3 tau and 1 each of delta, delta', psi and chi subunits) which binds 3 Pol III cores (1 core on the leading strand and 2 on the lagging strand) each with a beta sliding clamp dimer. Additional proteins in the replisome are other copies of gamma, psi and chi, Ssb, DNA helicase and RNA primase (By similarity). Interacts with DNA replication inhibitor toxin SocB (PubMed:24239291).</text>
</comment>
<comment type="subcellular location">
    <subcellularLocation>
        <location evidence="5">Cytoplasm</location>
    </subcellularLocation>
    <text evidence="2">Forms a discrete locus during DNA replication that moves from one pole to mid-cell before dispersing once DNA has been replicated. Overexpressed tagged toxin SocB colocalizes with these loci but causes their premature collapse (PubMed:24239291).</text>
</comment>
<comment type="induction">
    <text evidence="3">Has 3 promoters, 1 is heat inducible at 42 degrees Celsius (probably under control of sigma-32). Transcription from the other 2 promoters is induced just prior to the onset of DNA replication, at the swarmer-to-stalked-cell transition, lasts through the stalked-cell phase and then decreases in the predivisional cell.</text>
</comment>
<comment type="disruption phenotype">
    <text evidence="3">Essential, it cannot be deleted.</text>
</comment>
<comment type="similarity">
    <text evidence="4">Belongs to the beta sliding clamp family.</text>
</comment>
<evidence type="ECO:0000250" key="1">
    <source>
        <dbReference type="UniProtKB" id="P0A988"/>
    </source>
</evidence>
<evidence type="ECO:0000269" key="2">
    <source>
    </source>
</evidence>
<evidence type="ECO:0000269" key="3">
    <source>
    </source>
</evidence>
<evidence type="ECO:0000305" key="4"/>
<evidence type="ECO:0000305" key="5">
    <source>
    </source>
</evidence>
<keyword id="KW-0963">Cytoplasm</keyword>
<keyword id="KW-0235">DNA replication</keyword>
<keyword id="KW-0238">DNA-binding</keyword>
<keyword id="KW-0239">DNA-directed DNA polymerase</keyword>
<keyword id="KW-0548">Nucleotidyltransferase</keyword>
<keyword id="KW-1185">Reference proteome</keyword>
<keyword id="KW-0346">Stress response</keyword>
<keyword id="KW-0808">Transferase</keyword>